<keyword id="KW-1167">Clathrin- and caveolin-independent endocytosis of virus by host</keyword>
<keyword id="KW-1165">Clathrin-mediated endocytosis of virus by host</keyword>
<keyword id="KW-1015">Disulfide bond</keyword>
<keyword id="KW-1170">Fusion of virus membrane with host endosomal membrane</keyword>
<keyword id="KW-1168">Fusion of virus membrane with host membrane</keyword>
<keyword id="KW-0325">Glycoprotein</keyword>
<keyword id="KW-0348">Hemagglutinin</keyword>
<keyword id="KW-1032">Host cell membrane</keyword>
<keyword id="KW-1043">Host membrane</keyword>
<keyword id="KW-0945">Host-virus interaction</keyword>
<keyword id="KW-0449">Lipoprotein</keyword>
<keyword id="KW-0472">Membrane</keyword>
<keyword id="KW-0564">Palmitate</keyword>
<keyword id="KW-0732">Signal</keyword>
<keyword id="KW-0812">Transmembrane</keyword>
<keyword id="KW-1161">Viral attachment to host cell</keyword>
<keyword id="KW-0261">Viral envelope protein</keyword>
<keyword id="KW-1162">Viral penetration into host cytoplasm</keyword>
<keyword id="KW-0946">Virion</keyword>
<keyword id="KW-1164">Virus endocytosis by host</keyword>
<keyword id="KW-1160">Virus entry into host cell</keyword>
<feature type="signal peptide" evidence="2">
    <location>
        <begin position="1"/>
        <end position="15"/>
    </location>
</feature>
<feature type="chain" id="PRO_0000039037" description="Hemagglutinin HA1 chain">
    <location>
        <begin position="16"/>
        <end position="108" status="greater than"/>
    </location>
</feature>
<feature type="glycosylation site" description="N-linked (GlcNAc...) asparagine; by host" evidence="2">
    <location>
        <position position="25"/>
    </location>
</feature>
<feature type="glycosylation site" description="N-linked (GlcNAc...) asparagine; by host" evidence="2">
    <location>
        <position position="26"/>
    </location>
</feature>
<feature type="glycosylation site" description="N-linked (GlcNAc...) asparagine; by host" evidence="2">
    <location>
        <position position="38"/>
    </location>
</feature>
<feature type="non-terminal residue">
    <location>
        <position position="108"/>
    </location>
</feature>
<accession>P03450</accession>
<evidence type="ECO:0000250" key="1"/>
<evidence type="ECO:0000255" key="2"/>
<evidence type="ECO:0000305" key="3"/>
<organism>
    <name type="scientific">Influenza A virus (strain A/RI/5-/1957 H2N2)</name>
    <dbReference type="NCBI Taxonomy" id="382828"/>
    <lineage>
        <taxon>Viruses</taxon>
        <taxon>Riboviria</taxon>
        <taxon>Orthornavirae</taxon>
        <taxon>Negarnaviricota</taxon>
        <taxon>Polyploviricotina</taxon>
        <taxon>Insthoviricetes</taxon>
        <taxon>Articulavirales</taxon>
        <taxon>Orthomyxoviridae</taxon>
        <taxon>Alphainfluenzavirus</taxon>
        <taxon>Alphainfluenzavirus influenzae</taxon>
        <taxon>Influenza A virus</taxon>
    </lineage>
</organism>
<sequence>MAIIYLILLFTAVRGDQICIGYHANNSTEKVDTILERNVTVTHAKDILEKTHNGKLCKLNGIPPLELGDCSIAGWLLGNPECDRLLSVPEWSYIMEKENPRDGLCYPG</sequence>
<gene>
    <name type="primary">HA</name>
</gene>
<comment type="function">
    <text>Binds to sialic acid-containing receptors on the cell surface, bringing about the attachment of the virus particle to the cell. This attachment induces virion internalization of about two third of the virus particles through clathrin-dependent endocytosis and about one third through a clathrin- and caveolin-independent pathway. Plays a major role in the determination of host range restriction and virulence. Class I viral fusion protein. Responsible for penetration of the virus into the cell cytoplasm by mediating the fusion of the membrane of the endocytosed virus particle with the endosomal membrane. Low pH in endosomes induces an irreversible conformational change in HA2, releasing the fusion hydrophobic peptide. Several trimers are required to form a competent fusion pore.</text>
</comment>
<comment type="subunit">
    <text>Homotrimer of disulfide-linked HA1-HA2.</text>
</comment>
<comment type="subcellular location">
    <subcellularLocation>
        <location evidence="3">Virion membrane</location>
        <topology evidence="3">Single-pass type I membrane protein</topology>
    </subcellularLocation>
    <subcellularLocation>
        <location>Host apical cell membrane</location>
        <topology>Single-pass type I membrane protein</topology>
    </subcellularLocation>
    <text>Targeted to the apical plasma membrane in epithelial polarized cells through a signal present in the transmembrane domain. Associated with glycosphingolipid- and cholesterol-enriched detergent-resistant lipid rafts.</text>
</comment>
<comment type="PTM">
    <text evidence="1">In natural infection, inactive HA is matured into HA1 and HA2 outside the cell by one or more trypsin-like, arginine-specific endoprotease secreted by the bronchial epithelial cells. One identified protease that may be involved in this process is secreted in lungs by club cells (By similarity).</text>
</comment>
<comment type="PTM">
    <text evidence="1">Palmitoylated.</text>
</comment>
<comment type="miscellaneous">
    <text>Major glycoprotein, comprises over 80% of the envelope proteins present in virus particle.</text>
</comment>
<comment type="miscellaneous">
    <text>The extent of infection into host organism is determined by HA. Influenza viruses bud from the apical surface of polarized epithelial cells (e.g. bronchial epithelial cells) into lumen of lungs and are therefore usually pneumotropic. The reason is that HA is cleaved by tryptase clara which is restricted to lungs. However, HAs of H5 and H7 pantropic avian viruses subtypes can be cleaved by furin and subtilisin-type enzymes, allowing the virus to grow in other organs than lungs.</text>
</comment>
<comment type="miscellaneous">
    <text>The influenza A genome consist of 8 RNA segments. Genetic variation of hemagglutinin and/or neuraminidase genes results in the emergence of new influenza strains. The mechanism of variation can be the result of point mutations or the result of genetic reassortment between segments of two different strains.</text>
</comment>
<comment type="similarity">
    <text evidence="3">Belongs to the influenza viruses hemagglutinin family.</text>
</comment>
<protein>
    <recommendedName>
        <fullName>Hemagglutinin</fullName>
    </recommendedName>
    <component>
        <recommendedName>
            <fullName>Hemagglutinin HA1 chain</fullName>
        </recommendedName>
    </component>
</protein>
<name>HEMA_I57A4</name>
<dbReference type="EMBL" id="J02154">
    <property type="protein sequence ID" value="AAA43196.1"/>
    <property type="molecule type" value="Genomic_RNA"/>
</dbReference>
<dbReference type="SMR" id="P03450"/>
<dbReference type="GlyCosmos" id="P03450">
    <property type="glycosylation" value="3 sites, No reported glycans"/>
</dbReference>
<dbReference type="GO" id="GO:0020002">
    <property type="term" value="C:host cell plasma membrane"/>
    <property type="evidence" value="ECO:0007669"/>
    <property type="project" value="UniProtKB-SubCell"/>
</dbReference>
<dbReference type="GO" id="GO:0016020">
    <property type="term" value="C:membrane"/>
    <property type="evidence" value="ECO:0007669"/>
    <property type="project" value="UniProtKB-KW"/>
</dbReference>
<dbReference type="GO" id="GO:0019031">
    <property type="term" value="C:viral envelope"/>
    <property type="evidence" value="ECO:0007669"/>
    <property type="project" value="UniProtKB-KW"/>
</dbReference>
<dbReference type="GO" id="GO:0055036">
    <property type="term" value="C:virion membrane"/>
    <property type="evidence" value="ECO:0007669"/>
    <property type="project" value="UniProtKB-SubCell"/>
</dbReference>
<dbReference type="GO" id="GO:0046789">
    <property type="term" value="F:host cell surface receptor binding"/>
    <property type="evidence" value="ECO:0007669"/>
    <property type="project" value="InterPro"/>
</dbReference>
<dbReference type="GO" id="GO:0075512">
    <property type="term" value="P:clathrin-dependent endocytosis of virus by host cell"/>
    <property type="evidence" value="ECO:0007669"/>
    <property type="project" value="UniProtKB-KW"/>
</dbReference>
<dbReference type="GO" id="GO:0039654">
    <property type="term" value="P:fusion of virus membrane with host endosome membrane"/>
    <property type="evidence" value="ECO:0007669"/>
    <property type="project" value="UniProtKB-KW"/>
</dbReference>
<dbReference type="GO" id="GO:0019064">
    <property type="term" value="P:fusion of virus membrane with host plasma membrane"/>
    <property type="evidence" value="ECO:0007669"/>
    <property type="project" value="InterPro"/>
</dbReference>
<dbReference type="GO" id="GO:0019062">
    <property type="term" value="P:virion attachment to host cell"/>
    <property type="evidence" value="ECO:0007669"/>
    <property type="project" value="UniProtKB-KW"/>
</dbReference>
<dbReference type="Gene3D" id="3.90.209.20">
    <property type="match status" value="1"/>
</dbReference>
<dbReference type="Gene3D" id="2.10.77.10">
    <property type="entry name" value="Hemagglutinin Chain A, Domain 2"/>
    <property type="match status" value="1"/>
</dbReference>
<dbReference type="InterPro" id="IPR008980">
    <property type="entry name" value="Capsid_hemagglutn"/>
</dbReference>
<dbReference type="InterPro" id="IPR013828">
    <property type="entry name" value="Hemagglutn_HA1_a/b_dom_sf"/>
</dbReference>
<dbReference type="InterPro" id="IPR000149">
    <property type="entry name" value="Hemagglutn_influenz_A"/>
</dbReference>
<dbReference type="InterPro" id="IPR001364">
    <property type="entry name" value="Hemagglutn_influenz_A/B"/>
</dbReference>
<dbReference type="Pfam" id="PF00509">
    <property type="entry name" value="Hemagglutinin"/>
    <property type="match status" value="1"/>
</dbReference>
<dbReference type="PRINTS" id="PR00330">
    <property type="entry name" value="HEMAGGLUTN1"/>
</dbReference>
<dbReference type="SUPFAM" id="SSF49818">
    <property type="entry name" value="Viral protein domain"/>
    <property type="match status" value="1"/>
</dbReference>
<reference key="1">
    <citation type="journal article" date="1981" name="Proc. Natl. Acad. Sci. U.S.A.">
        <title>Sequence relationships among the hemagglutinin genes of 12 subtypes of influenza A virus.</title>
        <authorList>
            <person name="Air G.M."/>
        </authorList>
    </citation>
    <scope>NUCLEOTIDE SEQUENCE [GENOMIC RNA]</scope>
</reference>
<proteinExistence type="inferred from homology"/>
<organismHost>
    <name type="scientific">Aves</name>
    <dbReference type="NCBI Taxonomy" id="8782"/>
</organismHost>
<organismHost>
    <name type="scientific">Homo sapiens</name>
    <name type="common">Human</name>
    <dbReference type="NCBI Taxonomy" id="9606"/>
</organismHost>